<keyword id="KW-0007">Acetylation</keyword>
<keyword id="KW-0129">CBS domain</keyword>
<keyword id="KW-0332">GMP biosynthesis</keyword>
<keyword id="KW-0479">Metal-binding</keyword>
<keyword id="KW-0520">NAD</keyword>
<keyword id="KW-0560">Oxidoreductase</keyword>
<keyword id="KW-0630">Potassium</keyword>
<keyword id="KW-0658">Purine biosynthesis</keyword>
<keyword id="KW-1185">Reference proteome</keyword>
<keyword id="KW-0677">Repeat</keyword>
<name>IMDH_ECO57</name>
<proteinExistence type="inferred from homology"/>
<dbReference type="EC" id="1.1.1.205" evidence="2"/>
<dbReference type="EMBL" id="AE005174">
    <property type="protein sequence ID" value="AAG57619.1"/>
    <property type="molecule type" value="Genomic_DNA"/>
</dbReference>
<dbReference type="EMBL" id="BA000007">
    <property type="protein sequence ID" value="BAB36793.1"/>
    <property type="molecule type" value="Genomic_DNA"/>
</dbReference>
<dbReference type="PIR" id="B91050">
    <property type="entry name" value="B91050"/>
</dbReference>
<dbReference type="PIR" id="G85894">
    <property type="entry name" value="G85894"/>
</dbReference>
<dbReference type="RefSeq" id="NP_311397.1">
    <property type="nucleotide sequence ID" value="NC_002695.1"/>
</dbReference>
<dbReference type="RefSeq" id="WP_001299507.1">
    <property type="nucleotide sequence ID" value="NZ_VOAI01000001.1"/>
</dbReference>
<dbReference type="SMR" id="P0ADG8"/>
<dbReference type="STRING" id="155864.Z3772"/>
<dbReference type="GeneID" id="917779"/>
<dbReference type="GeneID" id="93774628"/>
<dbReference type="KEGG" id="ece:Z3772"/>
<dbReference type="KEGG" id="ecs:ECs_3370"/>
<dbReference type="PATRIC" id="fig|386585.9.peg.3521"/>
<dbReference type="eggNOG" id="COG0516">
    <property type="taxonomic scope" value="Bacteria"/>
</dbReference>
<dbReference type="eggNOG" id="COG0517">
    <property type="taxonomic scope" value="Bacteria"/>
</dbReference>
<dbReference type="HOGENOM" id="CLU_022552_2_2_6"/>
<dbReference type="UniPathway" id="UPA00601">
    <property type="reaction ID" value="UER00295"/>
</dbReference>
<dbReference type="Proteomes" id="UP000000558">
    <property type="component" value="Chromosome"/>
</dbReference>
<dbReference type="Proteomes" id="UP000002519">
    <property type="component" value="Chromosome"/>
</dbReference>
<dbReference type="GO" id="GO:0003938">
    <property type="term" value="F:IMP dehydrogenase activity"/>
    <property type="evidence" value="ECO:0007669"/>
    <property type="project" value="UniProtKB-UniRule"/>
</dbReference>
<dbReference type="GO" id="GO:0046872">
    <property type="term" value="F:metal ion binding"/>
    <property type="evidence" value="ECO:0007669"/>
    <property type="project" value="UniProtKB-UniRule"/>
</dbReference>
<dbReference type="GO" id="GO:0000166">
    <property type="term" value="F:nucleotide binding"/>
    <property type="evidence" value="ECO:0007669"/>
    <property type="project" value="UniProtKB-UniRule"/>
</dbReference>
<dbReference type="GO" id="GO:0006177">
    <property type="term" value="P:GMP biosynthetic process"/>
    <property type="evidence" value="ECO:0007669"/>
    <property type="project" value="UniProtKB-UniRule"/>
</dbReference>
<dbReference type="GO" id="GO:0006183">
    <property type="term" value="P:GTP biosynthetic process"/>
    <property type="evidence" value="ECO:0007669"/>
    <property type="project" value="TreeGrafter"/>
</dbReference>
<dbReference type="CDD" id="cd04601">
    <property type="entry name" value="CBS_pair_IMPDH"/>
    <property type="match status" value="1"/>
</dbReference>
<dbReference type="CDD" id="cd00381">
    <property type="entry name" value="IMPDH"/>
    <property type="match status" value="1"/>
</dbReference>
<dbReference type="FunFam" id="3.20.20.70:FF:000003">
    <property type="entry name" value="GMP reductase"/>
    <property type="match status" value="1"/>
</dbReference>
<dbReference type="Gene3D" id="3.20.20.70">
    <property type="entry name" value="Aldolase class I"/>
    <property type="match status" value="1"/>
</dbReference>
<dbReference type="HAMAP" id="MF_01964">
    <property type="entry name" value="IMPDH"/>
    <property type="match status" value="1"/>
</dbReference>
<dbReference type="InterPro" id="IPR013785">
    <property type="entry name" value="Aldolase_TIM"/>
</dbReference>
<dbReference type="InterPro" id="IPR000644">
    <property type="entry name" value="CBS_dom"/>
</dbReference>
<dbReference type="InterPro" id="IPR046342">
    <property type="entry name" value="CBS_dom_sf"/>
</dbReference>
<dbReference type="InterPro" id="IPR005990">
    <property type="entry name" value="IMP_DH"/>
</dbReference>
<dbReference type="InterPro" id="IPR015875">
    <property type="entry name" value="IMP_DH/GMP_Rdtase_CS"/>
</dbReference>
<dbReference type="InterPro" id="IPR001093">
    <property type="entry name" value="IMP_DH_GMPRt"/>
</dbReference>
<dbReference type="NCBIfam" id="TIGR01302">
    <property type="entry name" value="IMP_dehydrog"/>
    <property type="match status" value="1"/>
</dbReference>
<dbReference type="PANTHER" id="PTHR11911:SF111">
    <property type="entry name" value="INOSINE-5'-MONOPHOSPHATE DEHYDROGENASE"/>
    <property type="match status" value="1"/>
</dbReference>
<dbReference type="PANTHER" id="PTHR11911">
    <property type="entry name" value="INOSINE-5-MONOPHOSPHATE DEHYDROGENASE RELATED"/>
    <property type="match status" value="1"/>
</dbReference>
<dbReference type="Pfam" id="PF00571">
    <property type="entry name" value="CBS"/>
    <property type="match status" value="2"/>
</dbReference>
<dbReference type="Pfam" id="PF00478">
    <property type="entry name" value="IMPDH"/>
    <property type="match status" value="1"/>
</dbReference>
<dbReference type="PIRSF" id="PIRSF000130">
    <property type="entry name" value="IMPDH"/>
    <property type="match status" value="1"/>
</dbReference>
<dbReference type="SMART" id="SM00116">
    <property type="entry name" value="CBS"/>
    <property type="match status" value="2"/>
</dbReference>
<dbReference type="SMART" id="SM01240">
    <property type="entry name" value="IMPDH"/>
    <property type="match status" value="1"/>
</dbReference>
<dbReference type="SUPFAM" id="SSF54631">
    <property type="entry name" value="CBS-domain pair"/>
    <property type="match status" value="1"/>
</dbReference>
<dbReference type="SUPFAM" id="SSF51412">
    <property type="entry name" value="Inosine monophosphate dehydrogenase (IMPDH)"/>
    <property type="match status" value="1"/>
</dbReference>
<dbReference type="PROSITE" id="PS51371">
    <property type="entry name" value="CBS"/>
    <property type="match status" value="2"/>
</dbReference>
<dbReference type="PROSITE" id="PS00487">
    <property type="entry name" value="IMP_DH_GMP_RED"/>
    <property type="match status" value="1"/>
</dbReference>
<evidence type="ECO:0000250" key="1"/>
<evidence type="ECO:0000255" key="2">
    <source>
        <dbReference type="HAMAP-Rule" id="MF_01964"/>
    </source>
</evidence>
<gene>
    <name evidence="2" type="primary">guaB</name>
    <name type="ordered locus">Z3772</name>
    <name type="ordered locus">ECs3370</name>
</gene>
<reference key="1">
    <citation type="journal article" date="2001" name="Nature">
        <title>Genome sequence of enterohaemorrhagic Escherichia coli O157:H7.</title>
        <authorList>
            <person name="Perna N.T."/>
            <person name="Plunkett G. III"/>
            <person name="Burland V."/>
            <person name="Mau B."/>
            <person name="Glasner J.D."/>
            <person name="Rose D.J."/>
            <person name="Mayhew G.F."/>
            <person name="Evans P.S."/>
            <person name="Gregor J."/>
            <person name="Kirkpatrick H.A."/>
            <person name="Posfai G."/>
            <person name="Hackett J."/>
            <person name="Klink S."/>
            <person name="Boutin A."/>
            <person name="Shao Y."/>
            <person name="Miller L."/>
            <person name="Grotbeck E.J."/>
            <person name="Davis N.W."/>
            <person name="Lim A."/>
            <person name="Dimalanta E.T."/>
            <person name="Potamousis K."/>
            <person name="Apodaca J."/>
            <person name="Anantharaman T.S."/>
            <person name="Lin J."/>
            <person name="Yen G."/>
            <person name="Schwartz D.C."/>
            <person name="Welch R.A."/>
            <person name="Blattner F.R."/>
        </authorList>
    </citation>
    <scope>NUCLEOTIDE SEQUENCE [LARGE SCALE GENOMIC DNA]</scope>
    <source>
        <strain>O157:H7 / EDL933 / ATCC 700927 / EHEC</strain>
    </source>
</reference>
<reference key="2">
    <citation type="journal article" date="2001" name="DNA Res.">
        <title>Complete genome sequence of enterohemorrhagic Escherichia coli O157:H7 and genomic comparison with a laboratory strain K-12.</title>
        <authorList>
            <person name="Hayashi T."/>
            <person name="Makino K."/>
            <person name="Ohnishi M."/>
            <person name="Kurokawa K."/>
            <person name="Ishii K."/>
            <person name="Yokoyama K."/>
            <person name="Han C.-G."/>
            <person name="Ohtsubo E."/>
            <person name="Nakayama K."/>
            <person name="Murata T."/>
            <person name="Tanaka M."/>
            <person name="Tobe T."/>
            <person name="Iida T."/>
            <person name="Takami H."/>
            <person name="Honda T."/>
            <person name="Sasakawa C."/>
            <person name="Ogasawara N."/>
            <person name="Yasunaga T."/>
            <person name="Kuhara S."/>
            <person name="Shiba T."/>
            <person name="Hattori M."/>
            <person name="Shinagawa H."/>
        </authorList>
    </citation>
    <scope>NUCLEOTIDE SEQUENCE [LARGE SCALE GENOMIC DNA]</scope>
    <source>
        <strain>O157:H7 / Sakai / RIMD 0509952 / EHEC</strain>
    </source>
</reference>
<comment type="function">
    <text evidence="2">Catalyzes the conversion of inosine 5'-phosphate (IMP) to xanthosine 5'-phosphate (XMP), the first committed and rate-limiting step in the de novo synthesis of guanine nucleotides, and therefore plays an important role in the regulation of cell growth.</text>
</comment>
<comment type="catalytic activity">
    <reaction evidence="2">
        <text>IMP + NAD(+) + H2O = XMP + NADH + H(+)</text>
        <dbReference type="Rhea" id="RHEA:11708"/>
        <dbReference type="ChEBI" id="CHEBI:15377"/>
        <dbReference type="ChEBI" id="CHEBI:15378"/>
        <dbReference type="ChEBI" id="CHEBI:57464"/>
        <dbReference type="ChEBI" id="CHEBI:57540"/>
        <dbReference type="ChEBI" id="CHEBI:57945"/>
        <dbReference type="ChEBI" id="CHEBI:58053"/>
        <dbReference type="EC" id="1.1.1.205"/>
    </reaction>
</comment>
<comment type="cofactor">
    <cofactor evidence="2">
        <name>K(+)</name>
        <dbReference type="ChEBI" id="CHEBI:29103"/>
    </cofactor>
</comment>
<comment type="activity regulation">
    <text evidence="2">Mycophenolic acid (MPA) is a non-competitive inhibitor that prevents formation of the closed enzyme conformation by binding to the same site as the amobile flap. In contrast, mizoribine monophosphate (MZP) is a competitive inhibitor that induces the closed conformation. MPA is a potent inhibitor of mammalian IMPDHs but a poor inhibitor of the bacterial enzymes. MZP is a more potent inhibitor of bacterial IMPDH.</text>
</comment>
<comment type="pathway">
    <text evidence="2">Purine metabolism; XMP biosynthesis via de novo pathway; XMP from IMP: step 1/1.</text>
</comment>
<comment type="subunit">
    <text evidence="2">Homotetramer.</text>
</comment>
<comment type="similarity">
    <text evidence="2">Belongs to the IMPDH/GMPR family.</text>
</comment>
<organism>
    <name type="scientific">Escherichia coli O157:H7</name>
    <dbReference type="NCBI Taxonomy" id="83334"/>
    <lineage>
        <taxon>Bacteria</taxon>
        <taxon>Pseudomonadati</taxon>
        <taxon>Pseudomonadota</taxon>
        <taxon>Gammaproteobacteria</taxon>
        <taxon>Enterobacterales</taxon>
        <taxon>Enterobacteriaceae</taxon>
        <taxon>Escherichia</taxon>
    </lineage>
</organism>
<sequence>MLRIAKEALTFDDVLLVPAHSTVLPNTADLSTQLTKTIRLNIPMLSAAMDTVTEARLAIALAQEGGIGFIHKNMSIERQAEEVRRVKKHESGVVTDPQTVLPTTTLREVKELTERNGFAGYPVVTEENELVGIITGRDVRFVTDLNQPVSVYMTPKERLVTVREGEAREVVLAKMHEKRVEKALVVDDEFHLIGMITVKDFQKAERKPNACKDEQGRLRVGAAVGAGAGNEERVDALVAAGVDVLLIDSSHGHSEGVLQRIRETRAKYPDLQIIGGNVATAAGARALAEAGCSAVKVGIGPGSICTTRIVTGVGVPQITAVADAVEALEGTGIPVIADGGIRFSGDIAKAIAAGASAVMVGSMLAGTEESPGEIELYQGRSYKSYRGMGSLGAMSKGSSDRYFQSDNAADKLVPEGIEGRVAYKGRLKEIIHQQMGGLRSCMGLTGCGTIDELRTKAEFVRISGAGIQESHVHDVTITKESPNYRLGS</sequence>
<feature type="chain" id="PRO_0000093696" description="Inosine-5'-monophosphate dehydrogenase">
    <location>
        <begin position="1"/>
        <end position="488"/>
    </location>
</feature>
<feature type="domain" description="CBS 1" evidence="2">
    <location>
        <begin position="93"/>
        <end position="149"/>
    </location>
</feature>
<feature type="domain" description="CBS 2" evidence="2">
    <location>
        <begin position="153"/>
        <end position="214"/>
    </location>
</feature>
<feature type="active site" description="Thioimidate intermediate" evidence="2">
    <location>
        <position position="305"/>
    </location>
</feature>
<feature type="active site" description="Proton acceptor" evidence="2">
    <location>
        <position position="401"/>
    </location>
</feature>
<feature type="binding site" evidence="2">
    <location>
        <begin position="248"/>
        <end position="250"/>
    </location>
    <ligand>
        <name>NAD(+)</name>
        <dbReference type="ChEBI" id="CHEBI:57540"/>
    </ligand>
</feature>
<feature type="binding site" evidence="2">
    <location>
        <position position="248"/>
    </location>
    <ligand>
        <name>NAD(+)</name>
        <dbReference type="ChEBI" id="CHEBI:57540"/>
    </ligand>
</feature>
<feature type="binding site" evidence="2">
    <location>
        <begin position="298"/>
        <end position="300"/>
    </location>
    <ligand>
        <name>NAD(+)</name>
        <dbReference type="ChEBI" id="CHEBI:57540"/>
    </ligand>
</feature>
<feature type="binding site" description="in other chain" evidence="2">
    <location>
        <position position="300"/>
    </location>
    <ligand>
        <name>K(+)</name>
        <dbReference type="ChEBI" id="CHEBI:29103"/>
        <note>ligand shared between two tetrameric partners</note>
    </ligand>
</feature>
<feature type="binding site" description="in other chain" evidence="2">
    <location>
        <position position="302"/>
    </location>
    <ligand>
        <name>K(+)</name>
        <dbReference type="ChEBI" id="CHEBI:29103"/>
        <note>ligand shared between two tetrameric partners</note>
    </ligand>
</feature>
<feature type="binding site" evidence="2">
    <location>
        <position position="303"/>
    </location>
    <ligand>
        <name>IMP</name>
        <dbReference type="ChEBI" id="CHEBI:58053"/>
    </ligand>
</feature>
<feature type="binding site" description="in other chain" evidence="2">
    <location>
        <position position="305"/>
    </location>
    <ligand>
        <name>K(+)</name>
        <dbReference type="ChEBI" id="CHEBI:29103"/>
        <note>ligand shared between two tetrameric partners</note>
    </ligand>
</feature>
<feature type="binding site" evidence="2">
    <location>
        <begin position="338"/>
        <end position="340"/>
    </location>
    <ligand>
        <name>IMP</name>
        <dbReference type="ChEBI" id="CHEBI:58053"/>
    </ligand>
</feature>
<feature type="binding site" evidence="2">
    <location>
        <begin position="361"/>
        <end position="362"/>
    </location>
    <ligand>
        <name>IMP</name>
        <dbReference type="ChEBI" id="CHEBI:58053"/>
    </ligand>
</feature>
<feature type="binding site" evidence="2">
    <location>
        <begin position="385"/>
        <end position="389"/>
    </location>
    <ligand>
        <name>IMP</name>
        <dbReference type="ChEBI" id="CHEBI:58053"/>
    </ligand>
</feature>
<feature type="binding site" evidence="2">
    <location>
        <position position="415"/>
    </location>
    <ligand>
        <name>IMP</name>
        <dbReference type="ChEBI" id="CHEBI:58053"/>
    </ligand>
</feature>
<feature type="binding site" evidence="2">
    <location>
        <position position="469"/>
    </location>
    <ligand>
        <name>K(+)</name>
        <dbReference type="ChEBI" id="CHEBI:29103"/>
        <note>ligand shared between two tetrameric partners</note>
    </ligand>
</feature>
<feature type="binding site" evidence="2">
    <location>
        <position position="470"/>
    </location>
    <ligand>
        <name>K(+)</name>
        <dbReference type="ChEBI" id="CHEBI:29103"/>
        <note>ligand shared between two tetrameric partners</note>
    </ligand>
</feature>
<feature type="binding site" evidence="2">
    <location>
        <position position="471"/>
    </location>
    <ligand>
        <name>K(+)</name>
        <dbReference type="ChEBI" id="CHEBI:29103"/>
        <note>ligand shared between two tetrameric partners</note>
    </ligand>
</feature>
<feature type="modified residue" description="N6-acetyllysine" evidence="1">
    <location>
        <position position="267"/>
    </location>
</feature>
<feature type="modified residue" description="N6-acetyllysine" evidence="1">
    <location>
        <position position="428"/>
    </location>
</feature>
<accession>P0ADG8</accession>
<accession>P06981</accession>
<accession>P76574</accession>
<accession>P78202</accession>
<protein>
    <recommendedName>
        <fullName evidence="2">Inosine-5'-monophosphate dehydrogenase</fullName>
        <shortName evidence="2">IMP dehydrogenase</shortName>
        <shortName evidence="2">IMPD</shortName>
        <shortName evidence="2">IMPDH</shortName>
        <ecNumber evidence="2">1.1.1.205</ecNumber>
    </recommendedName>
</protein>